<accession>A2SQV5</accession>
<sequence>MKFDIEEFKERRKTDFEGAWHAGPSVITPPESSKIYPRYAYRRAKVHPIFDTIARLRAAYMSMGFDEAMVPVFIDEQDVYRQFGPEAAAVLDRVYYVGGLPRPNVGISRERLDAIAEIIEKPLAEGTEEKLMKCLHAYKKGKFDGDDLTHEMSVALGVDDGVVVHILDTVFPEFKELAPESSRTTLRSHMTSGWFISLAQMWDKKPMPIRMFSVDRCFRREQEEDATHLRTYHSASCIVAGEDVTVEEGKAVAEGLLSAFGFTEFRFQPDEKRSKYYMPETQTEVYGKHPVHGWVEVATFGIYSPAALAEYGVGVPVMNLGMGVERLAMVLTQAEDVRKLSFAQLYPPVYSDTDLTKGIGLREEPQTAEGRRAVRAVMETAAAHAAERSPCSFPAWKGELYGHQVEIVVEEPEENTSLLGPAALNEVYVRKGAVLGVPDTEKFADVKAEGVPVGISFLYSTANLALARIEEAARVGEGTSIQVKMSKHPSDVNLKIEEYVMRYITDNKKKLDLRGPVFMTITSKIL</sequence>
<gene>
    <name evidence="1" type="primary">sepS</name>
    <name type="ordered locus">Mlab_0537</name>
</gene>
<keyword id="KW-0030">Aminoacyl-tRNA synthetase</keyword>
<keyword id="KW-0067">ATP-binding</keyword>
<keyword id="KW-0436">Ligase</keyword>
<keyword id="KW-0547">Nucleotide-binding</keyword>
<keyword id="KW-0648">Protein biosynthesis</keyword>
<keyword id="KW-1185">Reference proteome</keyword>
<name>SEPS_METLZ</name>
<dbReference type="EC" id="6.1.1.27" evidence="1"/>
<dbReference type="EMBL" id="CP000559">
    <property type="protein sequence ID" value="ABN06711.1"/>
    <property type="molecule type" value="Genomic_DNA"/>
</dbReference>
<dbReference type="RefSeq" id="WP_011832912.1">
    <property type="nucleotide sequence ID" value="NC_008942.1"/>
</dbReference>
<dbReference type="SMR" id="A2SQV5"/>
<dbReference type="STRING" id="410358.Mlab_0537"/>
<dbReference type="GeneID" id="4795209"/>
<dbReference type="KEGG" id="mla:Mlab_0537"/>
<dbReference type="eggNOG" id="arCOG00411">
    <property type="taxonomic scope" value="Archaea"/>
</dbReference>
<dbReference type="HOGENOM" id="CLU_506822_0_0_2"/>
<dbReference type="OrthoDB" id="145125at2157"/>
<dbReference type="Proteomes" id="UP000000365">
    <property type="component" value="Chromosome"/>
</dbReference>
<dbReference type="GO" id="GO:0005524">
    <property type="term" value="F:ATP binding"/>
    <property type="evidence" value="ECO:0007669"/>
    <property type="project" value="UniProtKB-UniRule"/>
</dbReference>
<dbReference type="GO" id="GO:0043816">
    <property type="term" value="F:phosphoserine-tRNA(Cys) ligase activity"/>
    <property type="evidence" value="ECO:0007669"/>
    <property type="project" value="UniProtKB-EC"/>
</dbReference>
<dbReference type="GO" id="GO:0000049">
    <property type="term" value="F:tRNA binding"/>
    <property type="evidence" value="ECO:0007669"/>
    <property type="project" value="InterPro"/>
</dbReference>
<dbReference type="GO" id="GO:0006412">
    <property type="term" value="P:translation"/>
    <property type="evidence" value="ECO:0007669"/>
    <property type="project" value="UniProtKB-KW"/>
</dbReference>
<dbReference type="GO" id="GO:0043039">
    <property type="term" value="P:tRNA aminoacylation"/>
    <property type="evidence" value="ECO:0007669"/>
    <property type="project" value="UniProtKB-UniRule"/>
</dbReference>
<dbReference type="Gene3D" id="6.20.250.20">
    <property type="match status" value="1"/>
</dbReference>
<dbReference type="Gene3D" id="3.30.930.10">
    <property type="entry name" value="Bira Bifunctional Protein, Domain 2"/>
    <property type="match status" value="1"/>
</dbReference>
<dbReference type="HAMAP" id="MF_01674">
    <property type="entry name" value="Sep_tRNA_synth"/>
    <property type="match status" value="1"/>
</dbReference>
<dbReference type="InterPro" id="IPR006195">
    <property type="entry name" value="aa-tRNA-synth_II"/>
</dbReference>
<dbReference type="InterPro" id="IPR045864">
    <property type="entry name" value="aa-tRNA-synth_II/BPL/LPL"/>
</dbReference>
<dbReference type="InterPro" id="IPR005246">
    <property type="entry name" value="O-Pseryl-tRNA(Cys)_ligase"/>
</dbReference>
<dbReference type="InterPro" id="IPR002319">
    <property type="entry name" value="Phenylalanyl-tRNA_Synthase"/>
</dbReference>
<dbReference type="InterPro" id="IPR041590">
    <property type="entry name" value="SepRS_C"/>
</dbReference>
<dbReference type="NCBIfam" id="TIGR00470">
    <property type="entry name" value="sepS"/>
    <property type="match status" value="1"/>
</dbReference>
<dbReference type="Pfam" id="PF18006">
    <property type="entry name" value="SepRS_C"/>
    <property type="match status" value="1"/>
</dbReference>
<dbReference type="Pfam" id="PF01409">
    <property type="entry name" value="tRNA-synt_2d"/>
    <property type="match status" value="1"/>
</dbReference>
<dbReference type="SUPFAM" id="SSF55681">
    <property type="entry name" value="Class II aaRS and biotin synthetases"/>
    <property type="match status" value="1"/>
</dbReference>
<dbReference type="PROSITE" id="PS50862">
    <property type="entry name" value="AA_TRNA_LIGASE_II"/>
    <property type="match status" value="1"/>
</dbReference>
<protein>
    <recommendedName>
        <fullName evidence="1">O-phosphoserine--tRNA(Cys) ligase</fullName>
        <shortName evidence="1">O-phosphoserine--tRNA ligase</shortName>
        <ecNumber evidence="1">6.1.1.27</ecNumber>
    </recommendedName>
    <alternativeName>
        <fullName evidence="1">Non-canonical O-phosphoseryl-tRNA(Cys) synthetase</fullName>
    </alternativeName>
    <alternativeName>
        <fullName evidence="1">O-phosphoseryl-tRNA(Cys) synthetase</fullName>
        <shortName evidence="1">SepRS</shortName>
    </alternativeName>
</protein>
<comment type="function">
    <text evidence="1">Catalyzes the attachment of O-phosphoserine (Sep) to tRNA(Cys).</text>
</comment>
<comment type="catalytic activity">
    <reaction evidence="1">
        <text>tRNA(Cys) + O-phospho-L-serine + ATP = O-phospho-L-seryl-tRNA(Cys) + AMP + diphosphate</text>
        <dbReference type="Rhea" id="RHEA:25678"/>
        <dbReference type="Rhea" id="RHEA-COMP:9661"/>
        <dbReference type="Rhea" id="RHEA-COMP:9719"/>
        <dbReference type="ChEBI" id="CHEBI:30616"/>
        <dbReference type="ChEBI" id="CHEBI:33019"/>
        <dbReference type="ChEBI" id="CHEBI:57524"/>
        <dbReference type="ChEBI" id="CHEBI:78442"/>
        <dbReference type="ChEBI" id="CHEBI:78551"/>
        <dbReference type="ChEBI" id="CHEBI:456215"/>
        <dbReference type="EC" id="6.1.1.27"/>
    </reaction>
</comment>
<comment type="subunit">
    <text evidence="1">Homotetramer. Interacts with SepCysS.</text>
</comment>
<comment type="similarity">
    <text evidence="1">Belongs to the class-II aminoacyl-tRNA synthetase family. O-phosphoseryl-tRNA(Cys) synthetase subfamily.</text>
</comment>
<evidence type="ECO:0000255" key="1">
    <source>
        <dbReference type="HAMAP-Rule" id="MF_01674"/>
    </source>
</evidence>
<proteinExistence type="inferred from homology"/>
<organism>
    <name type="scientific">Methanocorpusculum labreanum (strain ATCC 43576 / DSM 4855 / Z)</name>
    <dbReference type="NCBI Taxonomy" id="410358"/>
    <lineage>
        <taxon>Archaea</taxon>
        <taxon>Methanobacteriati</taxon>
        <taxon>Methanobacteriota</taxon>
        <taxon>Stenosarchaea group</taxon>
        <taxon>Methanomicrobia</taxon>
        <taxon>Methanomicrobiales</taxon>
        <taxon>Methanocorpusculaceae</taxon>
        <taxon>Methanocorpusculum</taxon>
    </lineage>
</organism>
<reference key="1">
    <citation type="journal article" date="2009" name="Stand. Genomic Sci.">
        <title>Complete genome sequence of Methanocorpusculum labreanum type strain Z.</title>
        <authorList>
            <person name="Anderson I.J."/>
            <person name="Sieprawska-Lupa M."/>
            <person name="Goltsman E."/>
            <person name="Lapidus A."/>
            <person name="Copeland A."/>
            <person name="Glavina Del Rio T."/>
            <person name="Tice H."/>
            <person name="Dalin E."/>
            <person name="Barry K."/>
            <person name="Pitluck S."/>
            <person name="Hauser L."/>
            <person name="Land M."/>
            <person name="Lucas S."/>
            <person name="Richardson P."/>
            <person name="Whitman W.B."/>
            <person name="Kyrpides N.C."/>
        </authorList>
    </citation>
    <scope>NUCLEOTIDE SEQUENCE [LARGE SCALE GENOMIC DNA]</scope>
    <source>
        <strain>ATCC 43576 / DSM 4855 / Z</strain>
    </source>
</reference>
<feature type="chain" id="PRO_0000363755" description="O-phosphoserine--tRNA(Cys) ligase">
    <location>
        <begin position="1"/>
        <end position="526"/>
    </location>
</feature>
<feature type="binding site" evidence="1">
    <location>
        <begin position="189"/>
        <end position="191"/>
    </location>
    <ligand>
        <name>substrate</name>
    </ligand>
</feature>
<feature type="binding site" evidence="1">
    <location>
        <begin position="234"/>
        <end position="236"/>
    </location>
    <ligand>
        <name>substrate</name>
    </ligand>
</feature>
<feature type="binding site" evidence="1">
    <location>
        <begin position="276"/>
        <end position="277"/>
    </location>
    <ligand>
        <name>substrate</name>
    </ligand>
</feature>
<feature type="binding site" evidence="1">
    <location>
        <position position="319"/>
    </location>
    <ligand>
        <name>substrate</name>
    </ligand>
</feature>